<proteinExistence type="inferred from homology"/>
<reference key="1">
    <citation type="submission" date="2007-07" db="EMBL/GenBank/DDBJ databases">
        <title>Complete sequence of Fervidobacterium nodosum Rt17-B1.</title>
        <authorList>
            <consortium name="US DOE Joint Genome Institute"/>
            <person name="Copeland A."/>
            <person name="Lucas S."/>
            <person name="Lapidus A."/>
            <person name="Barry K."/>
            <person name="Glavina del Rio T."/>
            <person name="Dalin E."/>
            <person name="Tice H."/>
            <person name="Pitluck S."/>
            <person name="Saunders E."/>
            <person name="Brettin T."/>
            <person name="Bruce D."/>
            <person name="Detter J.C."/>
            <person name="Han C."/>
            <person name="Schmutz J."/>
            <person name="Larimer F."/>
            <person name="Land M."/>
            <person name="Hauser L."/>
            <person name="Kyrpides N."/>
            <person name="Mikhailova N."/>
            <person name="Nelson K."/>
            <person name="Gogarten J.P."/>
            <person name="Noll K."/>
            <person name="Richardson P."/>
        </authorList>
    </citation>
    <scope>NUCLEOTIDE SEQUENCE [LARGE SCALE GENOMIC DNA]</scope>
    <source>
        <strain>ATCC 35602 / DSM 5306 / Rt17-B1</strain>
    </source>
</reference>
<comment type="similarity">
    <text evidence="1">Belongs to the UPF0145 family.</text>
</comment>
<evidence type="ECO:0000255" key="1">
    <source>
        <dbReference type="HAMAP-Rule" id="MF_00338"/>
    </source>
</evidence>
<accession>A7HK58</accession>
<name>Y426_FERNB</name>
<keyword id="KW-1185">Reference proteome</keyword>
<organism>
    <name type="scientific">Fervidobacterium nodosum (strain ATCC 35602 / DSM 5306 / Rt17-B1)</name>
    <dbReference type="NCBI Taxonomy" id="381764"/>
    <lineage>
        <taxon>Bacteria</taxon>
        <taxon>Thermotogati</taxon>
        <taxon>Thermotogota</taxon>
        <taxon>Thermotogae</taxon>
        <taxon>Thermotogales</taxon>
        <taxon>Fervidobacteriaceae</taxon>
        <taxon>Fervidobacterium</taxon>
    </lineage>
</organism>
<gene>
    <name type="ordered locus">Fnod_0426</name>
</gene>
<dbReference type="EMBL" id="CP000771">
    <property type="protein sequence ID" value="ABS60291.1"/>
    <property type="molecule type" value="Genomic_DNA"/>
</dbReference>
<dbReference type="RefSeq" id="WP_011993611.1">
    <property type="nucleotide sequence ID" value="NC_009718.1"/>
</dbReference>
<dbReference type="SMR" id="A7HK58"/>
<dbReference type="STRING" id="381764.Fnod_0426"/>
<dbReference type="KEGG" id="fno:Fnod_0426"/>
<dbReference type="eggNOG" id="COG0393">
    <property type="taxonomic scope" value="Bacteria"/>
</dbReference>
<dbReference type="HOGENOM" id="CLU_117144_1_2_0"/>
<dbReference type="OrthoDB" id="9796448at2"/>
<dbReference type="Proteomes" id="UP000002415">
    <property type="component" value="Chromosome"/>
</dbReference>
<dbReference type="Gene3D" id="3.30.110.70">
    <property type="entry name" value="Hypothetical protein apc22750. Chain B"/>
    <property type="match status" value="1"/>
</dbReference>
<dbReference type="HAMAP" id="MF_00338">
    <property type="entry name" value="UPF0145"/>
    <property type="match status" value="1"/>
</dbReference>
<dbReference type="InterPro" id="IPR035439">
    <property type="entry name" value="UPF0145_dom_sf"/>
</dbReference>
<dbReference type="InterPro" id="IPR002765">
    <property type="entry name" value="UPF0145_YbjQ-like"/>
</dbReference>
<dbReference type="PANTHER" id="PTHR34068:SF2">
    <property type="entry name" value="UPF0145 PROTEIN SCO3412"/>
    <property type="match status" value="1"/>
</dbReference>
<dbReference type="PANTHER" id="PTHR34068">
    <property type="entry name" value="UPF0145 PROTEIN YBJQ"/>
    <property type="match status" value="1"/>
</dbReference>
<dbReference type="Pfam" id="PF01906">
    <property type="entry name" value="YbjQ_1"/>
    <property type="match status" value="1"/>
</dbReference>
<dbReference type="SUPFAM" id="SSF117782">
    <property type="entry name" value="YbjQ-like"/>
    <property type="match status" value="1"/>
</dbReference>
<protein>
    <recommendedName>
        <fullName evidence="1">UPF0145 protein Fnod_0426</fullName>
    </recommendedName>
</protein>
<sequence>MIVVTTDFVPGYEIVETLGIVTGSIVNSKHLGKDIAAAFKTLAGGEIKSYTELLVESRNIALKRMIDEAEKLGADAVIGLRFGSSSVMQSAAEILAYGTAVKLRKLSE</sequence>
<feature type="chain" id="PRO_1000072052" description="UPF0145 protein Fnod_0426">
    <location>
        <begin position="1"/>
        <end position="108"/>
    </location>
</feature>